<organism>
    <name type="scientific">Limosilactobacillus reuteri subsp. reuteri (strain JCM 1112)</name>
    <name type="common">Lactobacillus reuteri</name>
    <dbReference type="NCBI Taxonomy" id="557433"/>
    <lineage>
        <taxon>Bacteria</taxon>
        <taxon>Bacillati</taxon>
        <taxon>Bacillota</taxon>
        <taxon>Bacilli</taxon>
        <taxon>Lactobacillales</taxon>
        <taxon>Lactobacillaceae</taxon>
        <taxon>Limosilactobacillus</taxon>
    </lineage>
</organism>
<accession>B2G721</accession>
<sequence length="403" mass="45100">MKIKQLPAIFEPARPVLQKIEEAGYEAYFVGGCVRDTILHDEIHDIDIATSAYPSEIKAIFNHTVDTGIEHGTVMILDHGTGYETTTFRTESGYQDYRRPDKVTFVRSLSEDLQRRDFTINALALREDGEVIDLFDGLEDLQKHLIKAVGNPNERFHEDALRMMRAVRFASKLDFVIDTATLKGIKENAPLLEKIAVERIRVELEKLLLGQNPVAGLKDFIATGLYQYCPGLENAQAALSALLILNQWHLENEAQLWSVLGLQLQLDQKEIGKFLKKWKTANDLIAQVKKVVPAVQAIRQRALTPTLMFNTGETALHDANQVAKLYGWAIDDEELQKAYQKLPIKNAKELAIDGRVLITKAGVKPGPLMGKILQQLTLAVVNGEIANNATVLLEKVEEITKEG</sequence>
<reference key="1">
    <citation type="journal article" date="2008" name="DNA Res.">
        <title>Comparative genome analysis of Lactobacillus reuteri and Lactobacillus fermentum reveal a genomic island for reuterin and cobalamin production.</title>
        <authorList>
            <person name="Morita H."/>
            <person name="Toh H."/>
            <person name="Fukuda S."/>
            <person name="Horikawa H."/>
            <person name="Oshima K."/>
            <person name="Suzuki T."/>
            <person name="Murakami M."/>
            <person name="Hisamatsu S."/>
            <person name="Kato Y."/>
            <person name="Takizawa T."/>
            <person name="Fukuoka H."/>
            <person name="Yoshimura T."/>
            <person name="Itoh K."/>
            <person name="O'Sullivan D.J."/>
            <person name="McKay L.L."/>
            <person name="Ohno H."/>
            <person name="Kikuchi J."/>
            <person name="Masaoka T."/>
            <person name="Hattori M."/>
        </authorList>
    </citation>
    <scope>NUCLEOTIDE SEQUENCE [LARGE SCALE GENOMIC DNA]</scope>
    <source>
        <strain>JCM 1112</strain>
    </source>
</reference>
<protein>
    <recommendedName>
        <fullName evidence="1">CCA-adding enzyme</fullName>
        <ecNumber evidence="1">2.7.7.72</ecNumber>
    </recommendedName>
    <alternativeName>
        <fullName evidence="1">CCA tRNA nucleotidyltransferase</fullName>
    </alternativeName>
    <alternativeName>
        <fullName evidence="1">tRNA CCA-pyrophosphorylase</fullName>
    </alternativeName>
    <alternativeName>
        <fullName evidence="1">tRNA adenylyl-/cytidylyl- transferase</fullName>
    </alternativeName>
    <alternativeName>
        <fullName evidence="1">tRNA nucleotidyltransferase</fullName>
    </alternativeName>
    <alternativeName>
        <fullName evidence="1">tRNA-NT</fullName>
    </alternativeName>
</protein>
<keyword id="KW-0067">ATP-binding</keyword>
<keyword id="KW-0460">Magnesium</keyword>
<keyword id="KW-0479">Metal-binding</keyword>
<keyword id="KW-0547">Nucleotide-binding</keyword>
<keyword id="KW-0548">Nucleotidyltransferase</keyword>
<keyword id="KW-0692">RNA repair</keyword>
<keyword id="KW-0694">RNA-binding</keyword>
<keyword id="KW-0808">Transferase</keyword>
<keyword id="KW-0819">tRNA processing</keyword>
<dbReference type="EC" id="2.7.7.72" evidence="1"/>
<dbReference type="EMBL" id="AP007281">
    <property type="protein sequence ID" value="BAG25253.1"/>
    <property type="molecule type" value="Genomic_DNA"/>
</dbReference>
<dbReference type="RefSeq" id="WP_003668104.1">
    <property type="nucleotide sequence ID" value="NC_010609.1"/>
</dbReference>
<dbReference type="SMR" id="B2G721"/>
<dbReference type="KEGG" id="lrf:LAR_0737"/>
<dbReference type="HOGENOM" id="CLU_015961_3_1_9"/>
<dbReference type="GO" id="GO:0005524">
    <property type="term" value="F:ATP binding"/>
    <property type="evidence" value="ECO:0007669"/>
    <property type="project" value="UniProtKB-UniRule"/>
</dbReference>
<dbReference type="GO" id="GO:0004810">
    <property type="term" value="F:CCA tRNA nucleotidyltransferase activity"/>
    <property type="evidence" value="ECO:0007669"/>
    <property type="project" value="UniProtKB-UniRule"/>
</dbReference>
<dbReference type="GO" id="GO:0000287">
    <property type="term" value="F:magnesium ion binding"/>
    <property type="evidence" value="ECO:0007669"/>
    <property type="project" value="UniProtKB-UniRule"/>
</dbReference>
<dbReference type="GO" id="GO:0000049">
    <property type="term" value="F:tRNA binding"/>
    <property type="evidence" value="ECO:0007669"/>
    <property type="project" value="UniProtKB-UniRule"/>
</dbReference>
<dbReference type="GO" id="GO:0042245">
    <property type="term" value="P:RNA repair"/>
    <property type="evidence" value="ECO:0007669"/>
    <property type="project" value="UniProtKB-KW"/>
</dbReference>
<dbReference type="GO" id="GO:0001680">
    <property type="term" value="P:tRNA 3'-terminal CCA addition"/>
    <property type="evidence" value="ECO:0007669"/>
    <property type="project" value="UniProtKB-UniRule"/>
</dbReference>
<dbReference type="CDD" id="cd05398">
    <property type="entry name" value="NT_ClassII-CCAase"/>
    <property type="match status" value="1"/>
</dbReference>
<dbReference type="Gene3D" id="1.10.110.30">
    <property type="match status" value="1"/>
</dbReference>
<dbReference type="Gene3D" id="1.10.246.80">
    <property type="match status" value="1"/>
</dbReference>
<dbReference type="Gene3D" id="1.20.58.560">
    <property type="match status" value="1"/>
</dbReference>
<dbReference type="Gene3D" id="3.30.460.10">
    <property type="entry name" value="Beta Polymerase, domain 2"/>
    <property type="match status" value="1"/>
</dbReference>
<dbReference type="HAMAP" id="MF_01263">
    <property type="entry name" value="CCA_bact_type3"/>
    <property type="match status" value="1"/>
</dbReference>
<dbReference type="InterPro" id="IPR050264">
    <property type="entry name" value="Bact_CCA-adding_enz_type3_sf"/>
</dbReference>
<dbReference type="InterPro" id="IPR032810">
    <property type="entry name" value="CCA-adding_enz_C"/>
</dbReference>
<dbReference type="InterPro" id="IPR023068">
    <property type="entry name" value="CCA-adding_enz_firmicutes"/>
</dbReference>
<dbReference type="InterPro" id="IPR043519">
    <property type="entry name" value="NT_sf"/>
</dbReference>
<dbReference type="InterPro" id="IPR002646">
    <property type="entry name" value="PolA_pol_head_dom"/>
</dbReference>
<dbReference type="InterPro" id="IPR032828">
    <property type="entry name" value="PolyA_RNA-bd"/>
</dbReference>
<dbReference type="NCBIfam" id="NF009814">
    <property type="entry name" value="PRK13299.1"/>
    <property type="match status" value="1"/>
</dbReference>
<dbReference type="PANTHER" id="PTHR46173">
    <property type="entry name" value="CCA TRNA NUCLEOTIDYLTRANSFERASE 1, MITOCHONDRIAL"/>
    <property type="match status" value="1"/>
</dbReference>
<dbReference type="PANTHER" id="PTHR46173:SF1">
    <property type="entry name" value="CCA TRNA NUCLEOTIDYLTRANSFERASE 1, MITOCHONDRIAL"/>
    <property type="match status" value="1"/>
</dbReference>
<dbReference type="Pfam" id="PF01743">
    <property type="entry name" value="PolyA_pol"/>
    <property type="match status" value="1"/>
</dbReference>
<dbReference type="Pfam" id="PF12627">
    <property type="entry name" value="PolyA_pol_RNAbd"/>
    <property type="match status" value="1"/>
</dbReference>
<dbReference type="Pfam" id="PF13735">
    <property type="entry name" value="tRNA_NucTran2_2"/>
    <property type="match status" value="1"/>
</dbReference>
<dbReference type="SUPFAM" id="SSF81301">
    <property type="entry name" value="Nucleotidyltransferase"/>
    <property type="match status" value="1"/>
</dbReference>
<dbReference type="SUPFAM" id="SSF81891">
    <property type="entry name" value="Poly A polymerase C-terminal region-like"/>
    <property type="match status" value="1"/>
</dbReference>
<name>CCA_LIMRJ</name>
<gene>
    <name evidence="1" type="primary">cca</name>
    <name type="ordered locus">LAR_0737</name>
</gene>
<evidence type="ECO:0000255" key="1">
    <source>
        <dbReference type="HAMAP-Rule" id="MF_01263"/>
    </source>
</evidence>
<comment type="function">
    <text evidence="1">Catalyzes the addition and repair of the essential 3'-terminal CCA sequence in tRNAs without using a nucleic acid template. Adds these three nucleotides in the order of C, C, and A to the tRNA nucleotide-73, using CTP and ATP as substrates and producing inorganic pyrophosphate. tRNA 3'-terminal CCA addition is required both for tRNA processing and repair. Also involved in tRNA surveillance by mediating tandem CCA addition to generate a CCACCA at the 3' terminus of unstable tRNAs. While stable tRNAs receive only 3'-terminal CCA, unstable tRNAs are marked with CCACCA and rapidly degraded.</text>
</comment>
<comment type="catalytic activity">
    <reaction evidence="1">
        <text>a tRNA precursor + 2 CTP + ATP = a tRNA with a 3' CCA end + 3 diphosphate</text>
        <dbReference type="Rhea" id="RHEA:14433"/>
        <dbReference type="Rhea" id="RHEA-COMP:10465"/>
        <dbReference type="Rhea" id="RHEA-COMP:10468"/>
        <dbReference type="ChEBI" id="CHEBI:30616"/>
        <dbReference type="ChEBI" id="CHEBI:33019"/>
        <dbReference type="ChEBI" id="CHEBI:37563"/>
        <dbReference type="ChEBI" id="CHEBI:74896"/>
        <dbReference type="ChEBI" id="CHEBI:83071"/>
        <dbReference type="EC" id="2.7.7.72"/>
    </reaction>
</comment>
<comment type="catalytic activity">
    <reaction evidence="1">
        <text>a tRNA with a 3' CCA end + 2 CTP + ATP = a tRNA with a 3' CCACCA end + 3 diphosphate</text>
        <dbReference type="Rhea" id="RHEA:76235"/>
        <dbReference type="Rhea" id="RHEA-COMP:10468"/>
        <dbReference type="Rhea" id="RHEA-COMP:18655"/>
        <dbReference type="ChEBI" id="CHEBI:30616"/>
        <dbReference type="ChEBI" id="CHEBI:33019"/>
        <dbReference type="ChEBI" id="CHEBI:37563"/>
        <dbReference type="ChEBI" id="CHEBI:83071"/>
        <dbReference type="ChEBI" id="CHEBI:195187"/>
    </reaction>
    <physiologicalReaction direction="left-to-right" evidence="1">
        <dbReference type="Rhea" id="RHEA:76236"/>
    </physiologicalReaction>
</comment>
<comment type="cofactor">
    <cofactor evidence="1">
        <name>Mg(2+)</name>
        <dbReference type="ChEBI" id="CHEBI:18420"/>
    </cofactor>
</comment>
<comment type="subunit">
    <text evidence="1">Homodimer.</text>
</comment>
<comment type="miscellaneous">
    <text evidence="1">A single active site specifically recognizes both ATP and CTP and is responsible for their addition.</text>
</comment>
<comment type="similarity">
    <text evidence="1">Belongs to the tRNA nucleotidyltransferase/poly(A) polymerase family. Bacterial CCA-adding enzyme type 3 subfamily.</text>
</comment>
<feature type="chain" id="PRO_1000140075" description="CCA-adding enzyme">
    <location>
        <begin position="1"/>
        <end position="403"/>
    </location>
</feature>
<feature type="binding site" evidence="1">
    <location>
        <position position="32"/>
    </location>
    <ligand>
        <name>ATP</name>
        <dbReference type="ChEBI" id="CHEBI:30616"/>
    </ligand>
</feature>
<feature type="binding site" evidence="1">
    <location>
        <position position="32"/>
    </location>
    <ligand>
        <name>CTP</name>
        <dbReference type="ChEBI" id="CHEBI:37563"/>
    </ligand>
</feature>
<feature type="binding site" evidence="1">
    <location>
        <position position="35"/>
    </location>
    <ligand>
        <name>ATP</name>
        <dbReference type="ChEBI" id="CHEBI:30616"/>
    </ligand>
</feature>
<feature type="binding site" evidence="1">
    <location>
        <position position="35"/>
    </location>
    <ligand>
        <name>CTP</name>
        <dbReference type="ChEBI" id="CHEBI:37563"/>
    </ligand>
</feature>
<feature type="binding site" evidence="1">
    <location>
        <position position="45"/>
    </location>
    <ligand>
        <name>Mg(2+)</name>
        <dbReference type="ChEBI" id="CHEBI:18420"/>
    </ligand>
</feature>
<feature type="binding site" evidence="1">
    <location>
        <position position="47"/>
    </location>
    <ligand>
        <name>Mg(2+)</name>
        <dbReference type="ChEBI" id="CHEBI:18420"/>
    </ligand>
</feature>
<feature type="binding site" evidence="1">
    <location>
        <position position="116"/>
    </location>
    <ligand>
        <name>ATP</name>
        <dbReference type="ChEBI" id="CHEBI:30616"/>
    </ligand>
</feature>
<feature type="binding site" evidence="1">
    <location>
        <position position="116"/>
    </location>
    <ligand>
        <name>CTP</name>
        <dbReference type="ChEBI" id="CHEBI:37563"/>
    </ligand>
</feature>
<feature type="binding site" evidence="1">
    <location>
        <position position="159"/>
    </location>
    <ligand>
        <name>ATP</name>
        <dbReference type="ChEBI" id="CHEBI:30616"/>
    </ligand>
</feature>
<feature type="binding site" evidence="1">
    <location>
        <position position="159"/>
    </location>
    <ligand>
        <name>CTP</name>
        <dbReference type="ChEBI" id="CHEBI:37563"/>
    </ligand>
</feature>
<feature type="binding site" evidence="1">
    <location>
        <position position="162"/>
    </location>
    <ligand>
        <name>ATP</name>
        <dbReference type="ChEBI" id="CHEBI:30616"/>
    </ligand>
</feature>
<feature type="binding site" evidence="1">
    <location>
        <position position="162"/>
    </location>
    <ligand>
        <name>CTP</name>
        <dbReference type="ChEBI" id="CHEBI:37563"/>
    </ligand>
</feature>
<feature type="binding site" evidence="1">
    <location>
        <position position="165"/>
    </location>
    <ligand>
        <name>ATP</name>
        <dbReference type="ChEBI" id="CHEBI:30616"/>
    </ligand>
</feature>
<feature type="binding site" evidence="1">
    <location>
        <position position="165"/>
    </location>
    <ligand>
        <name>CTP</name>
        <dbReference type="ChEBI" id="CHEBI:37563"/>
    </ligand>
</feature>
<feature type="binding site" evidence="1">
    <location>
        <position position="168"/>
    </location>
    <ligand>
        <name>ATP</name>
        <dbReference type="ChEBI" id="CHEBI:30616"/>
    </ligand>
</feature>
<feature type="binding site" evidence="1">
    <location>
        <position position="168"/>
    </location>
    <ligand>
        <name>CTP</name>
        <dbReference type="ChEBI" id="CHEBI:37563"/>
    </ligand>
</feature>
<proteinExistence type="inferred from homology"/>